<dbReference type="EMBL" id="AC006921">
    <property type="protein sequence ID" value="AAD21433.1"/>
    <property type="status" value="ALT_SEQ"/>
    <property type="molecule type" value="Genomic_DNA"/>
</dbReference>
<dbReference type="EMBL" id="CP002685">
    <property type="protein sequence ID" value="AEC09234.1"/>
    <property type="molecule type" value="Genomic_DNA"/>
</dbReference>
<dbReference type="EMBL" id="BT002934">
    <property type="protein sequence ID" value="AAO22748.1"/>
    <property type="molecule type" value="mRNA"/>
</dbReference>
<dbReference type="PIR" id="D84779">
    <property type="entry name" value="D84779"/>
</dbReference>
<dbReference type="RefSeq" id="NP_181174.2">
    <property type="nucleotide sequence ID" value="NM_129190.3"/>
</dbReference>
<dbReference type="BioGRID" id="3550">
    <property type="interactions" value="15"/>
</dbReference>
<dbReference type="FunCoup" id="Q84WP5">
    <property type="interactions" value="199"/>
</dbReference>
<dbReference type="IntAct" id="Q84WP5">
    <property type="interactions" value="15"/>
</dbReference>
<dbReference type="iPTMnet" id="Q84WP5"/>
<dbReference type="PaxDb" id="3702-AT2G36330.1"/>
<dbReference type="ProteomicsDB" id="222683"/>
<dbReference type="EnsemblPlants" id="AT2G36330.1">
    <property type="protein sequence ID" value="AT2G36330.1"/>
    <property type="gene ID" value="AT2G36330"/>
</dbReference>
<dbReference type="GeneID" id="818206"/>
<dbReference type="Gramene" id="AT2G36330.1">
    <property type="protein sequence ID" value="AT2G36330.1"/>
    <property type="gene ID" value="AT2G36330"/>
</dbReference>
<dbReference type="KEGG" id="ath:AT2G36330"/>
<dbReference type="Araport" id="AT2G36330"/>
<dbReference type="TAIR" id="AT2G36330">
    <property type="gene designation" value="CASPL4A3"/>
</dbReference>
<dbReference type="eggNOG" id="ENOG502QW75">
    <property type="taxonomic scope" value="Eukaryota"/>
</dbReference>
<dbReference type="HOGENOM" id="CLU_048961_2_0_1"/>
<dbReference type="InParanoid" id="Q84WP5"/>
<dbReference type="OMA" id="REYRFCL"/>
<dbReference type="PhylomeDB" id="Q84WP5"/>
<dbReference type="PRO" id="PR:Q84WP5"/>
<dbReference type="Proteomes" id="UP000006548">
    <property type="component" value="Chromosome 2"/>
</dbReference>
<dbReference type="ExpressionAtlas" id="Q84WP5">
    <property type="expression patterns" value="baseline and differential"/>
</dbReference>
<dbReference type="GO" id="GO:0005886">
    <property type="term" value="C:plasma membrane"/>
    <property type="evidence" value="ECO:0007669"/>
    <property type="project" value="UniProtKB-SubCell"/>
</dbReference>
<dbReference type="InterPro" id="IPR006702">
    <property type="entry name" value="CASP_dom"/>
</dbReference>
<dbReference type="PANTHER" id="PTHR33573:SF50">
    <property type="entry name" value="CASP-LIKE PROTEIN 4A3"/>
    <property type="match status" value="1"/>
</dbReference>
<dbReference type="PANTHER" id="PTHR33573">
    <property type="entry name" value="CASP-LIKE PROTEIN 4A4"/>
    <property type="match status" value="1"/>
</dbReference>
<dbReference type="Pfam" id="PF04535">
    <property type="entry name" value="CASP_dom"/>
    <property type="match status" value="1"/>
</dbReference>
<keyword id="KW-1003">Cell membrane</keyword>
<keyword id="KW-0472">Membrane</keyword>
<keyword id="KW-1185">Reference proteome</keyword>
<keyword id="KW-0812">Transmembrane</keyword>
<keyword id="KW-1133">Transmembrane helix</keyword>
<gene>
    <name type="ordered locus">At2g36330</name>
    <name type="ORF">F2H17.6</name>
</gene>
<comment type="subunit">
    <text evidence="1">Homodimer and heterodimers.</text>
</comment>
<comment type="subcellular location">
    <subcellularLocation>
        <location evidence="1">Cell membrane</location>
        <topology evidence="1">Multi-pass membrane protein</topology>
    </subcellularLocation>
</comment>
<comment type="similarity">
    <text evidence="4">Belongs to the Casparian strip membrane proteins (CASP) family.</text>
</comment>
<comment type="sequence caution" evidence="4">
    <conflict type="erroneous gene model prediction">
        <sequence resource="EMBL-CDS" id="AAD21433"/>
    </conflict>
    <text>The predicted gene At2g36330 has been split into 2 genes: At2g36325 and At2g36330.</text>
</comment>
<organism>
    <name type="scientific">Arabidopsis thaliana</name>
    <name type="common">Mouse-ear cress</name>
    <dbReference type="NCBI Taxonomy" id="3702"/>
    <lineage>
        <taxon>Eukaryota</taxon>
        <taxon>Viridiplantae</taxon>
        <taxon>Streptophyta</taxon>
        <taxon>Embryophyta</taxon>
        <taxon>Tracheophyta</taxon>
        <taxon>Spermatophyta</taxon>
        <taxon>Magnoliopsida</taxon>
        <taxon>eudicotyledons</taxon>
        <taxon>Gunneridae</taxon>
        <taxon>Pentapetalae</taxon>
        <taxon>rosids</taxon>
        <taxon>malvids</taxon>
        <taxon>Brassicales</taxon>
        <taxon>Brassicaceae</taxon>
        <taxon>Camelineae</taxon>
        <taxon>Arabidopsis</taxon>
    </lineage>
</organism>
<reference key="1">
    <citation type="journal article" date="1999" name="Nature">
        <title>Sequence and analysis of chromosome 2 of the plant Arabidopsis thaliana.</title>
        <authorList>
            <person name="Lin X."/>
            <person name="Kaul S."/>
            <person name="Rounsley S.D."/>
            <person name="Shea T.P."/>
            <person name="Benito M.-I."/>
            <person name="Town C.D."/>
            <person name="Fujii C.Y."/>
            <person name="Mason T.M."/>
            <person name="Bowman C.L."/>
            <person name="Barnstead M.E."/>
            <person name="Feldblyum T.V."/>
            <person name="Buell C.R."/>
            <person name="Ketchum K.A."/>
            <person name="Lee J.J."/>
            <person name="Ronning C.M."/>
            <person name="Koo H.L."/>
            <person name="Moffat K.S."/>
            <person name="Cronin L.A."/>
            <person name="Shen M."/>
            <person name="Pai G."/>
            <person name="Van Aken S."/>
            <person name="Umayam L."/>
            <person name="Tallon L.J."/>
            <person name="Gill J.E."/>
            <person name="Adams M.D."/>
            <person name="Carrera A.J."/>
            <person name="Creasy T.H."/>
            <person name="Goodman H.M."/>
            <person name="Somerville C.R."/>
            <person name="Copenhaver G.P."/>
            <person name="Preuss D."/>
            <person name="Nierman W.C."/>
            <person name="White O."/>
            <person name="Eisen J.A."/>
            <person name="Salzberg S.L."/>
            <person name="Fraser C.M."/>
            <person name="Venter J.C."/>
        </authorList>
    </citation>
    <scope>NUCLEOTIDE SEQUENCE [LARGE SCALE GENOMIC DNA]</scope>
    <source>
        <strain>cv. Columbia</strain>
    </source>
</reference>
<reference key="2">
    <citation type="journal article" date="2017" name="Plant J.">
        <title>Araport11: a complete reannotation of the Arabidopsis thaliana reference genome.</title>
        <authorList>
            <person name="Cheng C.Y."/>
            <person name="Krishnakumar V."/>
            <person name="Chan A.P."/>
            <person name="Thibaud-Nissen F."/>
            <person name="Schobel S."/>
            <person name="Town C.D."/>
        </authorList>
    </citation>
    <scope>GENOME REANNOTATION</scope>
    <source>
        <strain>cv. Columbia</strain>
    </source>
</reference>
<reference key="3">
    <citation type="journal article" date="2003" name="Science">
        <title>Empirical analysis of transcriptional activity in the Arabidopsis genome.</title>
        <authorList>
            <person name="Yamada K."/>
            <person name="Lim J."/>
            <person name="Dale J.M."/>
            <person name="Chen H."/>
            <person name="Shinn P."/>
            <person name="Palm C.J."/>
            <person name="Southwick A.M."/>
            <person name="Wu H.C."/>
            <person name="Kim C.J."/>
            <person name="Nguyen M."/>
            <person name="Pham P.K."/>
            <person name="Cheuk R.F."/>
            <person name="Karlin-Newmann G."/>
            <person name="Liu S.X."/>
            <person name="Lam B."/>
            <person name="Sakano H."/>
            <person name="Wu T."/>
            <person name="Yu G."/>
            <person name="Miranda M."/>
            <person name="Quach H.L."/>
            <person name="Tripp M."/>
            <person name="Chang C.H."/>
            <person name="Lee J.M."/>
            <person name="Toriumi M.J."/>
            <person name="Chan M.M."/>
            <person name="Tang C.C."/>
            <person name="Onodera C.S."/>
            <person name="Deng J.M."/>
            <person name="Akiyama K."/>
            <person name="Ansari Y."/>
            <person name="Arakawa T."/>
            <person name="Banh J."/>
            <person name="Banno F."/>
            <person name="Bowser L."/>
            <person name="Brooks S.Y."/>
            <person name="Carninci P."/>
            <person name="Chao Q."/>
            <person name="Choy N."/>
            <person name="Enju A."/>
            <person name="Goldsmith A.D."/>
            <person name="Gurjal M."/>
            <person name="Hansen N.F."/>
            <person name="Hayashizaki Y."/>
            <person name="Johnson-Hopson C."/>
            <person name="Hsuan V.W."/>
            <person name="Iida K."/>
            <person name="Karnes M."/>
            <person name="Khan S."/>
            <person name="Koesema E."/>
            <person name="Ishida J."/>
            <person name="Jiang P.X."/>
            <person name="Jones T."/>
            <person name="Kawai J."/>
            <person name="Kamiya A."/>
            <person name="Meyers C."/>
            <person name="Nakajima M."/>
            <person name="Narusaka M."/>
            <person name="Seki M."/>
            <person name="Sakurai T."/>
            <person name="Satou M."/>
            <person name="Tamse R."/>
            <person name="Vaysberg M."/>
            <person name="Wallender E.K."/>
            <person name="Wong C."/>
            <person name="Yamamura Y."/>
            <person name="Yuan S."/>
            <person name="Shinozaki K."/>
            <person name="Davis R.W."/>
            <person name="Theologis A."/>
            <person name="Ecker J.R."/>
        </authorList>
    </citation>
    <scope>NUCLEOTIDE SEQUENCE [LARGE SCALE MRNA]</scope>
    <source>
        <strain>cv. Columbia</strain>
    </source>
</reference>
<reference key="4">
    <citation type="journal article" date="2014" name="Plant Physiol.">
        <title>Functional and evolutionary analysis of the CASPARIAN STRIP MEMBRANE DOMAIN PROTEIN family.</title>
        <authorList>
            <person name="Roppolo D."/>
            <person name="Boeckmann B."/>
            <person name="Pfister A."/>
            <person name="Boutet E."/>
            <person name="Rubio M.C."/>
            <person name="Denervaud-Tendon V."/>
            <person name="Vermeer J.E."/>
            <person name="Gheyselinck J."/>
            <person name="Xenarios I."/>
            <person name="Geldner N."/>
        </authorList>
    </citation>
    <scope>GENE FAMILY</scope>
    <scope>NOMENCLATURE</scope>
</reference>
<evidence type="ECO:0000250" key="1"/>
<evidence type="ECO:0000255" key="2"/>
<evidence type="ECO:0000256" key="3">
    <source>
        <dbReference type="SAM" id="MobiDB-lite"/>
    </source>
</evidence>
<evidence type="ECO:0000305" key="4"/>
<feature type="chain" id="PRO_0000308660" description="CASP-like protein 4A3">
    <location>
        <begin position="1"/>
        <end position="283"/>
    </location>
</feature>
<feature type="topological domain" description="Cytoplasmic" evidence="2">
    <location>
        <begin position="1"/>
        <end position="135"/>
    </location>
</feature>
<feature type="transmembrane region" description="Helical" evidence="2">
    <location>
        <begin position="136"/>
        <end position="156"/>
    </location>
</feature>
<feature type="topological domain" description="Extracellular" evidence="2">
    <location>
        <begin position="157"/>
        <end position="174"/>
    </location>
</feature>
<feature type="transmembrane region" description="Helical" evidence="2">
    <location>
        <begin position="175"/>
        <end position="195"/>
    </location>
</feature>
<feature type="topological domain" description="Cytoplasmic" evidence="2">
    <location>
        <begin position="196"/>
        <end position="212"/>
    </location>
</feature>
<feature type="transmembrane region" description="Helical" evidence="2">
    <location>
        <begin position="213"/>
        <end position="233"/>
    </location>
</feature>
<feature type="topological domain" description="Extracellular" evidence="2">
    <location>
        <begin position="234"/>
        <end position="251"/>
    </location>
</feature>
<feature type="transmembrane region" description="Helical" evidence="2">
    <location>
        <begin position="252"/>
        <end position="272"/>
    </location>
</feature>
<feature type="topological domain" description="Cytoplasmic" evidence="2">
    <location>
        <begin position="273"/>
        <end position="283"/>
    </location>
</feature>
<feature type="region of interest" description="Disordered" evidence="3">
    <location>
        <begin position="1"/>
        <end position="86"/>
    </location>
</feature>
<feature type="compositionally biased region" description="Low complexity" evidence="3">
    <location>
        <begin position="9"/>
        <end position="20"/>
    </location>
</feature>
<feature type="compositionally biased region" description="Basic and acidic residues" evidence="3">
    <location>
        <begin position="50"/>
        <end position="79"/>
    </location>
</feature>
<protein>
    <recommendedName>
        <fullName>CASP-like protein 4A3</fullName>
        <shortName>AtCASPL4A3</shortName>
    </recommendedName>
</protein>
<name>CSPL8_ARATH</name>
<sequence>MRSPAKTMPSMSPSSVSTEKSPPPSDTSMAIVAFDNSTTHFSSSPSPPHSLDHSSESEKEDAKSKPESRRNKNPGKVEETPSPIVVVHNHNRSVKEVVPTRKSARVGSGRSSGQRSGAVSAILRRSRREEVVKFSALGFRLSEVVLALISFSIMAADKTKGWSGDSFDRYKEYRFCLSVNVVAFVYSSFQACDLAYHLVKEKHLISHHLRPLFEFIIDQVLAYLLMSASTAAVTRVDDWVSNWGKDEFTEMASASIAMSFLAFLAFAFSSLISGYNLFNQGSL</sequence>
<accession>Q84WP5</accession>
<accession>Q9SJM5</accession>
<proteinExistence type="evidence at transcript level"/>